<gene>
    <name evidence="1" type="primary">truD</name>
    <name type="ordered locus">Asuc_2053</name>
</gene>
<feature type="chain" id="PRO_1000084727" description="tRNA pseudouridine synthase D">
    <location>
        <begin position="1"/>
        <end position="335"/>
    </location>
</feature>
<feature type="domain" description="TRUD" evidence="1">
    <location>
        <begin position="152"/>
        <end position="308"/>
    </location>
</feature>
<feature type="active site" description="Nucleophile" evidence="1">
    <location>
        <position position="77"/>
    </location>
</feature>
<comment type="function">
    <text evidence="1">Responsible for synthesis of pseudouridine from uracil-13 in transfer RNAs.</text>
</comment>
<comment type="catalytic activity">
    <reaction evidence="1">
        <text>uridine(13) in tRNA = pseudouridine(13) in tRNA</text>
        <dbReference type="Rhea" id="RHEA:42540"/>
        <dbReference type="Rhea" id="RHEA-COMP:10105"/>
        <dbReference type="Rhea" id="RHEA-COMP:10106"/>
        <dbReference type="ChEBI" id="CHEBI:65314"/>
        <dbReference type="ChEBI" id="CHEBI:65315"/>
        <dbReference type="EC" id="5.4.99.27"/>
    </reaction>
</comment>
<comment type="similarity">
    <text evidence="1">Belongs to the pseudouridine synthase TruD family.</text>
</comment>
<evidence type="ECO:0000255" key="1">
    <source>
        <dbReference type="HAMAP-Rule" id="MF_01082"/>
    </source>
</evidence>
<proteinExistence type="inferred from homology"/>
<protein>
    <recommendedName>
        <fullName evidence="1">tRNA pseudouridine synthase D</fullName>
        <ecNumber evidence="1">5.4.99.27</ecNumber>
    </recommendedName>
    <alternativeName>
        <fullName evidence="1">tRNA pseudouridine(13) synthase</fullName>
    </alternativeName>
    <alternativeName>
        <fullName evidence="1">tRNA pseudouridylate synthase D</fullName>
    </alternativeName>
    <alternativeName>
        <fullName evidence="1">tRNA-uridine isomerase D</fullName>
    </alternativeName>
</protein>
<keyword id="KW-0413">Isomerase</keyword>
<keyword id="KW-1185">Reference proteome</keyword>
<keyword id="KW-0819">tRNA processing</keyword>
<accession>A6VR02</accession>
<reference key="1">
    <citation type="journal article" date="2010" name="BMC Genomics">
        <title>A genomic perspective on the potential of Actinobacillus succinogenes for industrial succinate production.</title>
        <authorList>
            <person name="McKinlay J.B."/>
            <person name="Laivenieks M."/>
            <person name="Schindler B.D."/>
            <person name="McKinlay A.A."/>
            <person name="Siddaramappa S."/>
            <person name="Challacombe J.F."/>
            <person name="Lowry S.R."/>
            <person name="Clum A."/>
            <person name="Lapidus A.L."/>
            <person name="Burkhart K.B."/>
            <person name="Harkins V."/>
            <person name="Vieille C."/>
        </authorList>
    </citation>
    <scope>NUCLEOTIDE SEQUENCE [LARGE SCALE GENOMIC DNA]</scope>
    <source>
        <strain>ATCC 55618 / DSM 22257 / CCUG 43843 / 130Z</strain>
    </source>
</reference>
<sequence>MLDLAYLQTAPEQTALLKQQATDFIVREELGYPLSGDGEFAAVKIRKTNANTIWAGEQLAKFCGISVRNMSYAGLKDRNAITDQWFSLHMPGKPTPDFSRFRIEGIEILEVTRHNRKIRTGSLQGNHFDILLRNADATEELNRRLNLVKRLGFPNYFTEQRFGRDGHNLTEAMRWAKGEIQVKDRKKRSFYLSAARGEVFNLVVSDRLQMGLATQVMPNDILQLAGSHSWFQANEKEDLNALQVRLEHHDILLTAPLIGDPPQSANALENQVVAQHQALLTLMKREHLKPARRPLLMRAQNLNWQFEPTGLRLQFFLPAGSYATALIRELVRVVD</sequence>
<organism>
    <name type="scientific">Actinobacillus succinogenes (strain ATCC 55618 / DSM 22257 / CCUG 43843 / 130Z)</name>
    <dbReference type="NCBI Taxonomy" id="339671"/>
    <lineage>
        <taxon>Bacteria</taxon>
        <taxon>Pseudomonadati</taxon>
        <taxon>Pseudomonadota</taxon>
        <taxon>Gammaproteobacteria</taxon>
        <taxon>Pasteurellales</taxon>
        <taxon>Pasteurellaceae</taxon>
        <taxon>Actinobacillus</taxon>
    </lineage>
</organism>
<name>TRUD_ACTSZ</name>
<dbReference type="EC" id="5.4.99.27" evidence="1"/>
<dbReference type="EMBL" id="CP000746">
    <property type="protein sequence ID" value="ABR75399.1"/>
    <property type="molecule type" value="Genomic_DNA"/>
</dbReference>
<dbReference type="RefSeq" id="WP_012073775.1">
    <property type="nucleotide sequence ID" value="NC_009655.1"/>
</dbReference>
<dbReference type="SMR" id="A6VR02"/>
<dbReference type="STRING" id="339671.Asuc_2053"/>
<dbReference type="KEGG" id="asu:Asuc_2053"/>
<dbReference type="eggNOG" id="COG0585">
    <property type="taxonomic scope" value="Bacteria"/>
</dbReference>
<dbReference type="HOGENOM" id="CLU_005281_4_0_6"/>
<dbReference type="OrthoDB" id="1550679at2"/>
<dbReference type="Proteomes" id="UP000001114">
    <property type="component" value="Chromosome"/>
</dbReference>
<dbReference type="GO" id="GO:0005829">
    <property type="term" value="C:cytosol"/>
    <property type="evidence" value="ECO:0007669"/>
    <property type="project" value="TreeGrafter"/>
</dbReference>
<dbReference type="GO" id="GO:0003723">
    <property type="term" value="F:RNA binding"/>
    <property type="evidence" value="ECO:0007669"/>
    <property type="project" value="InterPro"/>
</dbReference>
<dbReference type="GO" id="GO:0160150">
    <property type="term" value="F:tRNA pseudouridine(13) synthase activity"/>
    <property type="evidence" value="ECO:0007669"/>
    <property type="project" value="UniProtKB-EC"/>
</dbReference>
<dbReference type="GO" id="GO:0031119">
    <property type="term" value="P:tRNA pseudouridine synthesis"/>
    <property type="evidence" value="ECO:0007669"/>
    <property type="project" value="UniProtKB-UniRule"/>
</dbReference>
<dbReference type="CDD" id="cd02575">
    <property type="entry name" value="PseudoU_synth_EcTruD"/>
    <property type="match status" value="1"/>
</dbReference>
<dbReference type="Gene3D" id="3.30.2350.20">
    <property type="entry name" value="TruD, catalytic domain"/>
    <property type="match status" value="1"/>
</dbReference>
<dbReference type="Gene3D" id="3.30.2340.10">
    <property type="entry name" value="TruD, insertion domain"/>
    <property type="match status" value="1"/>
</dbReference>
<dbReference type="HAMAP" id="MF_01082">
    <property type="entry name" value="TruD"/>
    <property type="match status" value="1"/>
</dbReference>
<dbReference type="InterPro" id="IPR020103">
    <property type="entry name" value="PsdUridine_synth_cat_dom_sf"/>
</dbReference>
<dbReference type="InterPro" id="IPR001656">
    <property type="entry name" value="PsdUridine_synth_TruD"/>
</dbReference>
<dbReference type="InterPro" id="IPR020119">
    <property type="entry name" value="PsdUridine_synth_TruD_CS"/>
</dbReference>
<dbReference type="InterPro" id="IPR011760">
    <property type="entry name" value="PsdUridine_synth_TruD_insert"/>
</dbReference>
<dbReference type="InterPro" id="IPR042214">
    <property type="entry name" value="TruD_catalytic"/>
</dbReference>
<dbReference type="InterPro" id="IPR043165">
    <property type="entry name" value="TruD_insert_sf"/>
</dbReference>
<dbReference type="InterPro" id="IPR050170">
    <property type="entry name" value="TruD_pseudoU_synthase"/>
</dbReference>
<dbReference type="NCBIfam" id="NF002155">
    <property type="entry name" value="PRK00984.1-4"/>
    <property type="match status" value="1"/>
</dbReference>
<dbReference type="NCBIfam" id="TIGR00094">
    <property type="entry name" value="tRNA_TruD_broad"/>
    <property type="match status" value="1"/>
</dbReference>
<dbReference type="PANTHER" id="PTHR47811">
    <property type="entry name" value="TRNA PSEUDOURIDINE SYNTHASE D"/>
    <property type="match status" value="1"/>
</dbReference>
<dbReference type="PANTHER" id="PTHR47811:SF1">
    <property type="entry name" value="TRNA PSEUDOURIDINE SYNTHASE D"/>
    <property type="match status" value="1"/>
</dbReference>
<dbReference type="Pfam" id="PF01142">
    <property type="entry name" value="TruD"/>
    <property type="match status" value="2"/>
</dbReference>
<dbReference type="SUPFAM" id="SSF55120">
    <property type="entry name" value="Pseudouridine synthase"/>
    <property type="match status" value="1"/>
</dbReference>
<dbReference type="PROSITE" id="PS50984">
    <property type="entry name" value="TRUD"/>
    <property type="match status" value="1"/>
</dbReference>
<dbReference type="PROSITE" id="PS01268">
    <property type="entry name" value="UPF0024"/>
    <property type="match status" value="1"/>
</dbReference>